<gene>
    <name evidence="1" type="primary">chlL</name>
</gene>
<feature type="chain" id="PRO_0000139565" description="Light-independent protochlorophyllide reductase iron-sulfur ATP-binding protein">
    <location>
        <begin position="1"/>
        <end position="291"/>
    </location>
</feature>
<feature type="binding site" evidence="1">
    <location>
        <begin position="10"/>
        <end position="15"/>
    </location>
    <ligand>
        <name>ATP</name>
        <dbReference type="ChEBI" id="CHEBI:30616"/>
    </ligand>
</feature>
<feature type="binding site" evidence="1">
    <location>
        <position position="14"/>
    </location>
    <ligand>
        <name>Mg(2+)</name>
        <dbReference type="ChEBI" id="CHEBI:18420"/>
    </ligand>
</feature>
<feature type="binding site" evidence="1">
    <location>
        <position position="39"/>
    </location>
    <ligand>
        <name>ATP</name>
        <dbReference type="ChEBI" id="CHEBI:30616"/>
    </ligand>
</feature>
<feature type="binding site" evidence="1">
    <location>
        <position position="95"/>
    </location>
    <ligand>
        <name>[4Fe-4S] cluster</name>
        <dbReference type="ChEBI" id="CHEBI:49883"/>
        <note>ligand shared between dimeric partners</note>
    </ligand>
</feature>
<feature type="binding site" evidence="1">
    <location>
        <position position="129"/>
    </location>
    <ligand>
        <name>[4Fe-4S] cluster</name>
        <dbReference type="ChEBI" id="CHEBI:49883"/>
        <note>ligand shared between dimeric partners</note>
    </ligand>
</feature>
<feature type="binding site" evidence="1">
    <location>
        <begin position="180"/>
        <end position="181"/>
    </location>
    <ligand>
        <name>ATP</name>
        <dbReference type="ChEBI" id="CHEBI:30616"/>
    </ligand>
</feature>
<comment type="function">
    <text evidence="1">Component of the dark-operative protochlorophyllide reductase (DPOR) that uses Mg-ATP and reduced ferredoxin to reduce ring D of protochlorophyllide (Pchlide) to form chlorophyllide a (Chlide). This reaction is light-independent. The L component serves as a unique electron donor to the NB-component of the complex, and binds Mg-ATP.</text>
</comment>
<comment type="catalytic activity">
    <reaction evidence="1">
        <text>chlorophyllide a + oxidized 2[4Fe-4S]-[ferredoxin] + 2 ADP + 2 phosphate = protochlorophyllide a + reduced 2[4Fe-4S]-[ferredoxin] + 2 ATP + 2 H2O</text>
        <dbReference type="Rhea" id="RHEA:28202"/>
        <dbReference type="Rhea" id="RHEA-COMP:10002"/>
        <dbReference type="Rhea" id="RHEA-COMP:10004"/>
        <dbReference type="ChEBI" id="CHEBI:15377"/>
        <dbReference type="ChEBI" id="CHEBI:30616"/>
        <dbReference type="ChEBI" id="CHEBI:33722"/>
        <dbReference type="ChEBI" id="CHEBI:33723"/>
        <dbReference type="ChEBI" id="CHEBI:43474"/>
        <dbReference type="ChEBI" id="CHEBI:83348"/>
        <dbReference type="ChEBI" id="CHEBI:83350"/>
        <dbReference type="ChEBI" id="CHEBI:456216"/>
        <dbReference type="EC" id="1.3.7.7"/>
    </reaction>
</comment>
<comment type="cofactor">
    <cofactor evidence="1">
        <name>[4Fe-4S] cluster</name>
        <dbReference type="ChEBI" id="CHEBI:49883"/>
    </cofactor>
    <text evidence="1">Binds 1 [4Fe-4S] cluster per dimer.</text>
</comment>
<comment type="pathway">
    <text evidence="1">Porphyrin-containing compound metabolism; chlorophyll biosynthesis (light-independent).</text>
</comment>
<comment type="subunit">
    <text evidence="1">Homodimer. Protochlorophyllide reductase is composed of three subunits; ChlL, ChlN and ChlB.</text>
</comment>
<comment type="subcellular location">
    <subcellularLocation>
        <location>Plastid</location>
        <location>Chloroplast</location>
    </subcellularLocation>
</comment>
<comment type="similarity">
    <text evidence="1">Belongs to the NifH/BchL/ChlL family.</text>
</comment>
<proteinExistence type="inferred from homology"/>
<evidence type="ECO:0000255" key="1">
    <source>
        <dbReference type="HAMAP-Rule" id="MF_00355"/>
    </source>
</evidence>
<name>CHLL_PINKO</name>
<protein>
    <recommendedName>
        <fullName evidence="1">Light-independent protochlorophyllide reductase iron-sulfur ATP-binding protein</fullName>
        <shortName evidence="1">DPOR subunit L</shortName>
        <shortName evidence="1">LI-POR subunit L</shortName>
        <ecNumber evidence="1">1.3.7.7</ecNumber>
    </recommendedName>
</protein>
<geneLocation type="chloroplast"/>
<organism>
    <name type="scientific">Pinus koraiensis</name>
    <name type="common">Korean pine</name>
    <dbReference type="NCBI Taxonomy" id="88728"/>
    <lineage>
        <taxon>Eukaryota</taxon>
        <taxon>Viridiplantae</taxon>
        <taxon>Streptophyta</taxon>
        <taxon>Embryophyta</taxon>
        <taxon>Tracheophyta</taxon>
        <taxon>Spermatophyta</taxon>
        <taxon>Pinopsida</taxon>
        <taxon>Pinidae</taxon>
        <taxon>Conifers I</taxon>
        <taxon>Pinales</taxon>
        <taxon>Pinaceae</taxon>
        <taxon>Pinus</taxon>
        <taxon>Pinus subgen. Strobus</taxon>
    </lineage>
</organism>
<keyword id="KW-0004">4Fe-4S</keyword>
<keyword id="KW-0067">ATP-binding</keyword>
<keyword id="KW-0149">Chlorophyll biosynthesis</keyword>
<keyword id="KW-0150">Chloroplast</keyword>
<keyword id="KW-0408">Iron</keyword>
<keyword id="KW-0411">Iron-sulfur</keyword>
<keyword id="KW-0460">Magnesium</keyword>
<keyword id="KW-0479">Metal-binding</keyword>
<keyword id="KW-0547">Nucleotide-binding</keyword>
<keyword id="KW-0560">Oxidoreductase</keyword>
<keyword id="KW-0602">Photosynthesis</keyword>
<keyword id="KW-0934">Plastid</keyword>
<sequence>MKIAVYGKGGIGKSTTSCNISVALARRGQKVLQIGCDPKHDSTFTLTGFLIPTIIDTLQSKDYHYEDIWPEDVIHKGYGGVDCVEAGGPPAGAGCGGYVVGETVKLLKELNAFYEYDIILFDVLGDVVCGGFAAPLNYADYCVIITDNGFDALFAANRITASIREKARTHPLRLAGLVGNRTSRRDLINKYVEACPMPVIEVLPIIEDIRVSRVKGKTLFEMVGSEPSLNYVCNYYLGIADQILSQPEGIVPKEIPDRELFSLLSDLYLNPIGGGGQKKKIQENFLGFTRI</sequence>
<accession>Q85WT6</accession>
<dbReference type="EC" id="1.3.7.7" evidence="1"/>
<dbReference type="EMBL" id="AY228468">
    <property type="protein sequence ID" value="AAO74133.1"/>
    <property type="molecule type" value="Genomic_DNA"/>
</dbReference>
<dbReference type="RefSeq" id="NP_817275.1">
    <property type="nucleotide sequence ID" value="NC_004677.2"/>
</dbReference>
<dbReference type="SMR" id="Q85WT6"/>
<dbReference type="GeneID" id="806900"/>
<dbReference type="UniPathway" id="UPA00670"/>
<dbReference type="GO" id="GO:0009507">
    <property type="term" value="C:chloroplast"/>
    <property type="evidence" value="ECO:0007669"/>
    <property type="project" value="UniProtKB-SubCell"/>
</dbReference>
<dbReference type="GO" id="GO:0051539">
    <property type="term" value="F:4 iron, 4 sulfur cluster binding"/>
    <property type="evidence" value="ECO:0007669"/>
    <property type="project" value="UniProtKB-UniRule"/>
</dbReference>
<dbReference type="GO" id="GO:0005524">
    <property type="term" value="F:ATP binding"/>
    <property type="evidence" value="ECO:0007669"/>
    <property type="project" value="UniProtKB-UniRule"/>
</dbReference>
<dbReference type="GO" id="GO:0046872">
    <property type="term" value="F:metal ion binding"/>
    <property type="evidence" value="ECO:0007669"/>
    <property type="project" value="UniProtKB-KW"/>
</dbReference>
<dbReference type="GO" id="GO:0016730">
    <property type="term" value="F:oxidoreductase activity, acting on iron-sulfur proteins as donors"/>
    <property type="evidence" value="ECO:0007669"/>
    <property type="project" value="InterPro"/>
</dbReference>
<dbReference type="GO" id="GO:0016636">
    <property type="term" value="F:oxidoreductase activity, acting on the CH-CH group of donors, iron-sulfur protein as acceptor"/>
    <property type="evidence" value="ECO:0007669"/>
    <property type="project" value="UniProtKB-UniRule"/>
</dbReference>
<dbReference type="GO" id="GO:0036068">
    <property type="term" value="P:light-independent chlorophyll biosynthetic process"/>
    <property type="evidence" value="ECO:0007669"/>
    <property type="project" value="UniProtKB-UniRule"/>
</dbReference>
<dbReference type="GO" id="GO:0019685">
    <property type="term" value="P:photosynthesis, dark reaction"/>
    <property type="evidence" value="ECO:0007669"/>
    <property type="project" value="InterPro"/>
</dbReference>
<dbReference type="CDD" id="cd02032">
    <property type="entry name" value="Bchl-like"/>
    <property type="match status" value="1"/>
</dbReference>
<dbReference type="Gene3D" id="3.40.50.300">
    <property type="entry name" value="P-loop containing nucleotide triphosphate hydrolases"/>
    <property type="match status" value="1"/>
</dbReference>
<dbReference type="HAMAP" id="MF_00355">
    <property type="entry name" value="ChlL_BchL"/>
    <property type="match status" value="1"/>
</dbReference>
<dbReference type="InterPro" id="IPR030655">
    <property type="entry name" value="NifH/chlL_CS"/>
</dbReference>
<dbReference type="InterPro" id="IPR000392">
    <property type="entry name" value="NifH/frxC"/>
</dbReference>
<dbReference type="InterPro" id="IPR027417">
    <property type="entry name" value="P-loop_NTPase"/>
</dbReference>
<dbReference type="InterPro" id="IPR005971">
    <property type="entry name" value="Protochlorophyllide_ATP-bd"/>
</dbReference>
<dbReference type="NCBIfam" id="TIGR01281">
    <property type="entry name" value="DPOR_bchL"/>
    <property type="match status" value="1"/>
</dbReference>
<dbReference type="PANTHER" id="PTHR42864">
    <property type="entry name" value="LIGHT-INDEPENDENT PROTOCHLOROPHYLLIDE REDUCTASE IRON-SULFUR ATP-BINDING PROTEIN"/>
    <property type="match status" value="1"/>
</dbReference>
<dbReference type="PANTHER" id="PTHR42864:SF2">
    <property type="entry name" value="LIGHT-INDEPENDENT PROTOCHLOROPHYLLIDE REDUCTASE IRON-SULFUR ATP-BINDING PROTEIN"/>
    <property type="match status" value="1"/>
</dbReference>
<dbReference type="Pfam" id="PF00142">
    <property type="entry name" value="Fer4_NifH"/>
    <property type="match status" value="1"/>
</dbReference>
<dbReference type="PIRSF" id="PIRSF000363">
    <property type="entry name" value="Nitrogenase_iron"/>
    <property type="match status" value="1"/>
</dbReference>
<dbReference type="PRINTS" id="PR00091">
    <property type="entry name" value="NITROGNASEII"/>
</dbReference>
<dbReference type="SUPFAM" id="SSF52540">
    <property type="entry name" value="P-loop containing nucleoside triphosphate hydrolases"/>
    <property type="match status" value="1"/>
</dbReference>
<dbReference type="PROSITE" id="PS00746">
    <property type="entry name" value="NIFH_FRXC_1"/>
    <property type="match status" value="1"/>
</dbReference>
<dbReference type="PROSITE" id="PS00692">
    <property type="entry name" value="NIFH_FRXC_2"/>
    <property type="match status" value="1"/>
</dbReference>
<dbReference type="PROSITE" id="PS51026">
    <property type="entry name" value="NIFH_FRXC_3"/>
    <property type="match status" value="1"/>
</dbReference>
<reference key="1">
    <citation type="submission" date="2003-02" db="EMBL/GenBank/DDBJ databases">
        <title>Complete nucleotide sequence of Pinus koraiensis.</title>
        <authorList>
            <person name="Noh E.W."/>
            <person name="Lee J.S."/>
            <person name="Choi Y.I."/>
            <person name="Han M.S."/>
            <person name="Yi Y.S."/>
            <person name="Han S.U."/>
        </authorList>
    </citation>
    <scope>NUCLEOTIDE SEQUENCE [LARGE SCALE GENOMIC DNA]</scope>
    <source>
        <strain>KangWon16</strain>
    </source>
</reference>